<dbReference type="EC" id="1.3.99.36"/>
<dbReference type="EMBL" id="HQ148718">
    <property type="protein sequence ID" value="ADR72965.1"/>
    <property type="molecule type" value="Genomic_DNA"/>
</dbReference>
<dbReference type="PDB" id="6JDD">
    <property type="method" value="X-ray"/>
    <property type="resolution" value="2.60 A"/>
    <property type="chains" value="A=1-190"/>
</dbReference>
<dbReference type="PDBsum" id="6JDD"/>
<dbReference type="SMR" id="E5KIB9"/>
<dbReference type="KEGG" id="ag:ADR72965"/>
<dbReference type="BioCyc" id="MetaCyc:MONOMER-18445"/>
<dbReference type="GO" id="GO:0016831">
    <property type="term" value="F:carboxy-lyase activity"/>
    <property type="evidence" value="ECO:0000314"/>
    <property type="project" value="UniProtKB"/>
</dbReference>
<dbReference type="GO" id="GO:0016491">
    <property type="term" value="F:oxidoreductase activity"/>
    <property type="evidence" value="ECO:0007669"/>
    <property type="project" value="UniProtKB-KW"/>
</dbReference>
<dbReference type="GO" id="GO:0030651">
    <property type="term" value="P:peptide antibiotic biosynthetic process"/>
    <property type="evidence" value="ECO:0000314"/>
    <property type="project" value="UniProtKB"/>
</dbReference>
<dbReference type="Gene3D" id="3.40.50.1950">
    <property type="entry name" value="Flavin prenyltransferase-like"/>
    <property type="match status" value="1"/>
</dbReference>
<dbReference type="InterPro" id="IPR053797">
    <property type="entry name" value="CypD-like"/>
</dbReference>
<dbReference type="InterPro" id="IPR036551">
    <property type="entry name" value="Flavin_trans-like"/>
</dbReference>
<dbReference type="InterPro" id="IPR003382">
    <property type="entry name" value="Flavoprotein"/>
</dbReference>
<dbReference type="NCBIfam" id="NF033753">
    <property type="entry name" value="RiPP_decarbCypD"/>
    <property type="match status" value="1"/>
</dbReference>
<dbReference type="Pfam" id="PF02441">
    <property type="entry name" value="Flavoprotein"/>
    <property type="match status" value="1"/>
</dbReference>
<dbReference type="SUPFAM" id="SSF52507">
    <property type="entry name" value="Homo-oligomeric flavin-containing Cys decarboxylases, HFCD"/>
    <property type="match status" value="1"/>
</dbReference>
<evidence type="ECO:0000269" key="1">
    <source>
    </source>
</evidence>
<evidence type="ECO:0000305" key="2"/>
<evidence type="ECO:0000312" key="3">
    <source>
        <dbReference type="EMBL" id="ADR72965.1"/>
    </source>
</evidence>
<evidence type="ECO:0007829" key="4">
    <source>
        <dbReference type="PDB" id="6JDD"/>
    </source>
</evidence>
<feature type="chain" id="PRO_0000408756" description="Cypemycin cysteine dehydrogenase (decarboxylating)">
    <location>
        <begin position="1"/>
        <end position="190"/>
    </location>
</feature>
<feature type="strand" evidence="4">
    <location>
        <begin position="7"/>
        <end position="15"/>
    </location>
</feature>
<feature type="helix" evidence="4">
    <location>
        <begin position="19"/>
        <end position="23"/>
    </location>
</feature>
<feature type="helix" evidence="4">
    <location>
        <begin position="24"/>
        <end position="34"/>
    </location>
</feature>
<feature type="strand" evidence="4">
    <location>
        <begin position="39"/>
        <end position="44"/>
    </location>
</feature>
<feature type="helix" evidence="4">
    <location>
        <begin position="48"/>
        <end position="50"/>
    </location>
</feature>
<feature type="helix" evidence="4">
    <location>
        <begin position="54"/>
        <end position="60"/>
    </location>
</feature>
<feature type="strand" evidence="4">
    <location>
        <begin position="65"/>
        <end position="69"/>
    </location>
</feature>
<feature type="helix" evidence="4">
    <location>
        <begin position="77"/>
        <end position="81"/>
    </location>
</feature>
<feature type="strand" evidence="4">
    <location>
        <begin position="90"/>
        <end position="95"/>
    </location>
</feature>
<feature type="helix" evidence="4">
    <location>
        <begin position="97"/>
        <end position="104"/>
    </location>
</feature>
<feature type="helix" evidence="4">
    <location>
        <begin position="111"/>
        <end position="118"/>
    </location>
</feature>
<feature type="strand" evidence="4">
    <location>
        <begin position="123"/>
        <end position="127"/>
    </location>
</feature>
<feature type="helix" evidence="4">
    <location>
        <begin position="134"/>
        <end position="142"/>
    </location>
</feature>
<feature type="helix" evidence="4">
    <location>
        <begin position="143"/>
        <end position="145"/>
    </location>
</feature>
<feature type="strand" evidence="4">
    <location>
        <begin position="149"/>
        <end position="151"/>
    </location>
</feature>
<feature type="helix" evidence="4">
    <location>
        <begin position="172"/>
        <end position="185"/>
    </location>
</feature>
<organism>
    <name type="scientific">Streptomyces sp</name>
    <dbReference type="NCBI Taxonomy" id="1931"/>
    <lineage>
        <taxon>Bacteria</taxon>
        <taxon>Bacillati</taxon>
        <taxon>Actinomycetota</taxon>
        <taxon>Actinomycetes</taxon>
        <taxon>Kitasatosporales</taxon>
        <taxon>Streptomycetaceae</taxon>
        <taxon>Streptomyces</taxon>
    </lineage>
</organism>
<comment type="function">
    <text evidence="1">Involved in the biosynthesis of the lanaridin cypemycin.</text>
</comment>
<comment type="catalytic activity">
    <reaction evidence="1">
        <text>[cypemycin](1-18)-L-Cys-L-Leu-L-Val-L-Cys + A = C(3,19),S(21)-[cypemycin](1-18)-L-Ala-L-Leu-N-thioethenyl-L-valinamide + hydrogen sulfide + AH2 + CO2</text>
        <dbReference type="Rhea" id="RHEA:10904"/>
        <dbReference type="Rhea" id="RHEA-COMP:9797"/>
        <dbReference type="Rhea" id="RHEA-COMP:9798"/>
        <dbReference type="ChEBI" id="CHEBI:13193"/>
        <dbReference type="ChEBI" id="CHEBI:16526"/>
        <dbReference type="ChEBI" id="CHEBI:17499"/>
        <dbReference type="ChEBI" id="CHEBI:29919"/>
        <dbReference type="ChEBI" id="CHEBI:78612"/>
        <dbReference type="ChEBI" id="CHEBI:78613"/>
        <dbReference type="EC" id="1.3.99.36"/>
    </reaction>
</comment>
<comment type="similarity">
    <text evidence="2">Belongs to the HFCD (homooligomeric flavin containing Cys decarboxylase) superfamily.</text>
</comment>
<name>CYPD_STRSQ</name>
<sequence length="190" mass="20750">MNVEKFEGAELHVHVTGSISAALVPWWIHWLREFQPELVVNVSVTPAASRFLAVRALRHLANGKVWVDSWDDPDVPPEVNSGKSGASECFLVFPATLDTVMRLAQGRADSPALMMLQLTDAPLVIADTFPGSNEIVENNVQTLKLRPNVEFAPRVNGVRASNRQTAEVGFNLPGALAAANRMRKEGRSGE</sequence>
<proteinExistence type="evidence at protein level"/>
<accession>E5KIB9</accession>
<protein>
    <recommendedName>
        <fullName>Cypemycin cysteine dehydrogenase (decarboxylating)</fullName>
        <ecNumber>1.3.99.36</ecNumber>
    </recommendedName>
</protein>
<reference evidence="2" key="1">
    <citation type="journal article" date="2010" name="Proc. Natl. Acad. Sci. U.S.A.">
        <title>Genome mining and genetic analysis of cypemycin biosynthesis reveal an unusual class of posttranslationally modified peptides.</title>
        <authorList>
            <person name="Claesen J."/>
            <person name="Bibb M."/>
        </authorList>
    </citation>
    <scope>NUCLEOTIDE SEQUENCE [GENOMIC DNA]</scope>
    <scope>FUNCTION</scope>
    <scope>CATALYTIC ACTIVITY</scope>
    <source>
        <strain evidence="1">OH-4156</strain>
    </source>
</reference>
<keyword id="KW-0002">3D-structure</keyword>
<keyword id="KW-0210">Decarboxylase</keyword>
<keyword id="KW-0456">Lyase</keyword>
<keyword id="KW-0560">Oxidoreductase</keyword>
<gene>
    <name evidence="3" type="primary">cypD</name>
</gene>